<reference key="1">
    <citation type="journal article" date="1998" name="J. Dairy Res.">
        <title>Sequence analysis of Camelus dromedarius milk caseins.</title>
        <authorList>
            <person name="Kappeler S."/>
            <person name="Farah Z."/>
            <person name="Puhan Z."/>
        </authorList>
    </citation>
    <scope>NUCLEOTIDE SEQUENCE [MRNA] (ISOFORM SHORT)</scope>
    <scope>PARTIAL PROTEIN SEQUENCE (ISOFORMS LONG AND SHORT)</scope>
    <scope>PHOSPHORYLATION AT SER-33; SER-83; SER-85; SER-86; SER-87 AND SER-88</scope>
    <scope>MASS SPECTROMETRY</scope>
    <source>
        <strain>Somali</strain>
        <tissue>Udder</tissue>
    </source>
</reference>
<sequence>MKLLILTCLVAVALARPKYPLRYPEVFQNEPDSIEEVLNKRKILELAVVSPIQFRQENIDELKDTRNEPTEDHIMEDTERKESGSSSSEEVVSSTTEQKDILKEDMPSQRYLEELHRLNKYKLLQLEAIRDQKLIPRVKLSSHPYLEQLYRINEDNHPQLGEPVKVVTQEQAYFHLEPFPQFFQLGASPYVAWYYPPQVMQYIAHPSSYDTPEGIASEDGGKTDVMPQWW</sequence>
<protein>
    <recommendedName>
        <fullName>Alpha-S1-casein</fullName>
    </recommendedName>
</protein>
<gene>
    <name type="primary">CSN1S1</name>
</gene>
<organism>
    <name type="scientific">Camelus dromedarius</name>
    <name type="common">Dromedary</name>
    <name type="synonym">Arabian camel</name>
    <dbReference type="NCBI Taxonomy" id="9838"/>
    <lineage>
        <taxon>Eukaryota</taxon>
        <taxon>Metazoa</taxon>
        <taxon>Chordata</taxon>
        <taxon>Craniata</taxon>
        <taxon>Vertebrata</taxon>
        <taxon>Euteleostomi</taxon>
        <taxon>Mammalia</taxon>
        <taxon>Eutheria</taxon>
        <taxon>Laurasiatheria</taxon>
        <taxon>Artiodactyla</taxon>
        <taxon>Tylopoda</taxon>
        <taxon>Camelidae</taxon>
        <taxon>Camelus</taxon>
    </lineage>
</organism>
<name>CASA1_CAMDR</name>
<dbReference type="EMBL" id="AJ012628">
    <property type="protein sequence ID" value="CAA10077.1"/>
    <property type="molecule type" value="mRNA"/>
</dbReference>
<dbReference type="RefSeq" id="NP_001290495.1">
    <molecule id="O97943-2"/>
    <property type="nucleotide sequence ID" value="NM_001303566.1"/>
</dbReference>
<dbReference type="RefSeq" id="XP_064339430.1">
    <molecule id="O97943-1"/>
    <property type="nucleotide sequence ID" value="XM_064483360.1"/>
</dbReference>
<dbReference type="SMR" id="O97943"/>
<dbReference type="iPTMnet" id="O97943"/>
<dbReference type="GeneID" id="105090954"/>
<dbReference type="KEGG" id="cdk:105090954"/>
<dbReference type="CTD" id="1446"/>
<dbReference type="OrthoDB" id="9635074at2759"/>
<dbReference type="GO" id="GO:0005615">
    <property type="term" value="C:extracellular space"/>
    <property type="evidence" value="ECO:0007669"/>
    <property type="project" value="TreeGrafter"/>
</dbReference>
<dbReference type="GO" id="GO:1903496">
    <property type="term" value="P:response to 11-deoxycorticosterone"/>
    <property type="evidence" value="ECO:0007669"/>
    <property type="project" value="TreeGrafter"/>
</dbReference>
<dbReference type="GO" id="GO:1903494">
    <property type="term" value="P:response to dehydroepiandrosterone"/>
    <property type="evidence" value="ECO:0007669"/>
    <property type="project" value="TreeGrafter"/>
</dbReference>
<dbReference type="GO" id="GO:0032355">
    <property type="term" value="P:response to estradiol"/>
    <property type="evidence" value="ECO:0007669"/>
    <property type="project" value="TreeGrafter"/>
</dbReference>
<dbReference type="GO" id="GO:0032570">
    <property type="term" value="P:response to progesterone"/>
    <property type="evidence" value="ECO:0007669"/>
    <property type="project" value="TreeGrafter"/>
</dbReference>
<dbReference type="InterPro" id="IPR026999">
    <property type="entry name" value="Alpha-s1_casein"/>
</dbReference>
<dbReference type="InterPro" id="IPR001588">
    <property type="entry name" value="Casein"/>
</dbReference>
<dbReference type="InterPro" id="IPR031305">
    <property type="entry name" value="Casein_CS"/>
</dbReference>
<dbReference type="PANTHER" id="PTHR10240">
    <property type="entry name" value="ALPHA-S1-CASEIN"/>
    <property type="match status" value="1"/>
</dbReference>
<dbReference type="PANTHER" id="PTHR10240:SF0">
    <property type="entry name" value="ALPHA-S1-CASEIN"/>
    <property type="match status" value="1"/>
</dbReference>
<dbReference type="Pfam" id="PF00363">
    <property type="entry name" value="Casein"/>
    <property type="match status" value="1"/>
</dbReference>
<dbReference type="PROSITE" id="PS00306">
    <property type="entry name" value="CASEIN_ALPHA_BETA"/>
    <property type="match status" value="1"/>
</dbReference>
<keyword id="KW-0025">Alternative splicing</keyword>
<keyword id="KW-0903">Direct protein sequencing</keyword>
<keyword id="KW-0494">Milk protein</keyword>
<keyword id="KW-0597">Phosphoprotein</keyword>
<keyword id="KW-0964">Secreted</keyword>
<keyword id="KW-0732">Signal</keyword>
<accession>O97943</accession>
<feature type="signal peptide">
    <location>
        <begin position="1"/>
        <end position="15"/>
    </location>
</feature>
<feature type="chain" id="PRO_0000004447" description="Alpha-S1-casein">
    <location>
        <begin position="16"/>
        <end position="230"/>
    </location>
</feature>
<feature type="region of interest" description="Disordered" evidence="1">
    <location>
        <begin position="60"/>
        <end position="103"/>
    </location>
</feature>
<feature type="region of interest" description="Disordered" evidence="1">
    <location>
        <begin position="211"/>
        <end position="230"/>
    </location>
</feature>
<feature type="compositionally biased region" description="Basic and acidic residues" evidence="1">
    <location>
        <begin position="60"/>
        <end position="83"/>
    </location>
</feature>
<feature type="compositionally biased region" description="Low complexity" evidence="1">
    <location>
        <begin position="84"/>
        <end position="96"/>
    </location>
</feature>
<feature type="modified residue" description="Phosphoserine" evidence="5">
    <location>
        <position position="33"/>
    </location>
</feature>
<feature type="modified residue" description="Phosphoserine" evidence="5">
    <location>
        <position position="83"/>
    </location>
</feature>
<feature type="modified residue" description="Phosphoserine" evidence="5">
    <location>
        <position position="85"/>
    </location>
</feature>
<feature type="modified residue" description="Phosphoserine" evidence="5">
    <location>
        <position position="86"/>
    </location>
</feature>
<feature type="modified residue" description="Phosphoserine" evidence="5">
    <location>
        <position position="87"/>
    </location>
</feature>
<feature type="modified residue" description="Phosphoserine" evidence="5">
    <location>
        <position position="88"/>
    </location>
</feature>
<feature type="splice variant" id="VSP_028751" description="In isoform Short." evidence="3">
    <location>
        <begin position="170"/>
        <end position="177"/>
    </location>
</feature>
<proteinExistence type="evidence at protein level"/>
<comment type="function">
    <text>Important role in the capacity of milk to transport calcium phosphate.</text>
</comment>
<comment type="subcellular location">
    <subcellularLocation>
        <location>Secreted</location>
    </subcellularLocation>
</comment>
<comment type="alternative products">
    <event type="alternative splicing"/>
    <isoform>
        <id>O97943-1</id>
        <name>Long</name>
        <sequence type="displayed"/>
    </isoform>
    <isoform>
        <id>O97943-2</id>
        <name>Short</name>
        <sequence type="described" ref="VSP_028751"/>
    </isoform>
</comment>
<comment type="tissue specificity">
    <text>Mammary gland specific. Secreted in milk.</text>
</comment>
<comment type="mass spectrometry">
    <molecule>Isoform Short</molecule>
    <text>with 6 phosphate groups. The measured range is 16-222.</text>
</comment>
<comment type="mass spectrometry">
    <molecule>Isoform Short</molecule>
    <text>The measured range is 16-222.</text>
</comment>
<comment type="similarity">
    <text evidence="4">Belongs to the alpha-casein family.</text>
</comment>
<evidence type="ECO:0000256" key="1">
    <source>
        <dbReference type="SAM" id="MobiDB-lite"/>
    </source>
</evidence>
<evidence type="ECO:0000269" key="2">
    <source>
    </source>
</evidence>
<evidence type="ECO:0000303" key="3">
    <source>
    </source>
</evidence>
<evidence type="ECO:0000305" key="4"/>
<evidence type="ECO:0000305" key="5">
    <source>
    </source>
</evidence>